<sequence>MTGKTAPAAAKKAPAAKKAPAPASKKAPEPAPKEKPAPTPKEGHAPTPKEEHAPPPKEEHAPPPKEEHAPAPAAETPPAPEHPPDAEQPAAPAAEHAPTPTHEAAPAHEEGPPPAAPAEAPAPEPEPEKPKEEPPSVPLSLAVEEVTENSVTLTWKAPEHTGKSSLDGYVVEICKDGSTDWTAVNKEPFLSTRYKIHDLASGEKVHVRVKAISASGTSDPATLEQPVLIREITDLPRIRLPRQLRQVYVRHVGEAVNLLIPFQGKPQPQVTWTKDNQPLDTSRVNIRNTDKDTIFFIRTAQRSDSGKYQLSVRINGAEDKAILDIRVIERPGPPQNLKLVDVWGFNVALEWSPPADNGNSEIKGYTVQKSDKKSGKWFTVLERCTRTSCTISDLIIGNTYSFRVFSENACGMSETAAVAAGVAHIKKTVYQPQKIPERDMMEPPKFTQPLTDRATTRGYSTHLFCSVRGFPQPKIIWMKNKMEIREDPKYIAMIEQGVCSLEIRKPSPFDAGVYTCKAVNPLGEASVDCKLDVKMPK</sequence>
<comment type="function">
    <text>Binds to myosin; probably involved in interaction with thick myofilaments in the A-band.</text>
</comment>
<comment type="tissue specificity">
    <text>Skeletal muscle. Seems to be also expressed in the slow tonic ald muscle. Not detected in gizzard or heart.</text>
</comment>
<comment type="similarity">
    <text evidence="3">Belongs to the immunoglobulin superfamily. MyBP family.</text>
</comment>
<protein>
    <recommendedName>
        <fullName>Myosin-binding protein H</fullName>
        <shortName>MyBP-H</shortName>
    </recommendedName>
    <alternativeName>
        <fullName>86 kDa protein</fullName>
    </alternativeName>
    <alternativeName>
        <fullName>H-protein</fullName>
    </alternativeName>
</protein>
<evidence type="ECO:0000255" key="1">
    <source>
        <dbReference type="PROSITE-ProRule" id="PRU00316"/>
    </source>
</evidence>
<evidence type="ECO:0000256" key="2">
    <source>
        <dbReference type="SAM" id="MobiDB-lite"/>
    </source>
</evidence>
<evidence type="ECO:0000305" key="3"/>
<keyword id="KW-0130">Cell adhesion</keyword>
<keyword id="KW-0903">Direct protein sequencing</keyword>
<keyword id="KW-0393">Immunoglobulin domain</keyword>
<keyword id="KW-0514">Muscle protein</keyword>
<keyword id="KW-1185">Reference proteome</keyword>
<keyword id="KW-0677">Repeat</keyword>
<keyword id="KW-0787">Thick filament</keyword>
<name>MYBPH_CHICK</name>
<accession>Q05623</accession>
<dbReference type="EMBL" id="L05605">
    <property type="protein sequence ID" value="AAA21418.1"/>
    <property type="molecule type" value="mRNA"/>
</dbReference>
<dbReference type="PIR" id="A46611">
    <property type="entry name" value="A46611"/>
</dbReference>
<dbReference type="RefSeq" id="NP_001026199.1">
    <property type="nucleotide sequence ID" value="NM_001031028.2"/>
</dbReference>
<dbReference type="SMR" id="Q05623"/>
<dbReference type="FunCoup" id="Q05623">
    <property type="interactions" value="95"/>
</dbReference>
<dbReference type="STRING" id="9031.ENSGALP00000039903"/>
<dbReference type="GlyGen" id="Q05623">
    <property type="glycosylation" value="1 site"/>
</dbReference>
<dbReference type="PaxDb" id="9031-ENSGALP00000039903"/>
<dbReference type="GeneID" id="421154"/>
<dbReference type="KEGG" id="gga:421154"/>
<dbReference type="CTD" id="343263"/>
<dbReference type="VEuPathDB" id="HostDB:geneid_421154"/>
<dbReference type="eggNOG" id="ENOG502QVIQ">
    <property type="taxonomic scope" value="Eukaryota"/>
</dbReference>
<dbReference type="HOGENOM" id="CLU_037185_0_0_1"/>
<dbReference type="InParanoid" id="Q05623"/>
<dbReference type="OrthoDB" id="6107607at2759"/>
<dbReference type="PhylomeDB" id="Q05623"/>
<dbReference type="PRO" id="PR:Q05623"/>
<dbReference type="Proteomes" id="UP000000539">
    <property type="component" value="Unassembled WGS sequence"/>
</dbReference>
<dbReference type="GO" id="GO:0031672">
    <property type="term" value="C:A band"/>
    <property type="evidence" value="ECO:0000314"/>
    <property type="project" value="AgBase"/>
</dbReference>
<dbReference type="GO" id="GO:0031430">
    <property type="term" value="C:M band"/>
    <property type="evidence" value="ECO:0000318"/>
    <property type="project" value="GO_Central"/>
</dbReference>
<dbReference type="GO" id="GO:0032982">
    <property type="term" value="C:myosin filament"/>
    <property type="evidence" value="ECO:0007669"/>
    <property type="project" value="UniProtKB-KW"/>
</dbReference>
<dbReference type="GO" id="GO:0007155">
    <property type="term" value="P:cell adhesion"/>
    <property type="evidence" value="ECO:0007669"/>
    <property type="project" value="UniProtKB-KW"/>
</dbReference>
<dbReference type="GO" id="GO:0045214">
    <property type="term" value="P:sarcomere organization"/>
    <property type="evidence" value="ECO:0000318"/>
    <property type="project" value="GO_Central"/>
</dbReference>
<dbReference type="CDD" id="cd00063">
    <property type="entry name" value="FN3"/>
    <property type="match status" value="2"/>
</dbReference>
<dbReference type="CDD" id="cd05748">
    <property type="entry name" value="Ig_Titin_like"/>
    <property type="match status" value="1"/>
</dbReference>
<dbReference type="FunFam" id="2.60.40.10:FF:000557">
    <property type="entry name" value="Myosin binding protein Ha"/>
    <property type="match status" value="1"/>
</dbReference>
<dbReference type="FunFam" id="2.60.40.10:FF:000225">
    <property type="entry name" value="Myosin-binding protein C, cardiac-type"/>
    <property type="match status" value="1"/>
</dbReference>
<dbReference type="FunFam" id="2.60.40.10:FF:000031">
    <property type="entry name" value="Myosin-binding protein C, slow type"/>
    <property type="match status" value="1"/>
</dbReference>
<dbReference type="FunFam" id="2.60.40.10:FF:000062">
    <property type="entry name" value="Myosin-binding protein C, slow type"/>
    <property type="match status" value="1"/>
</dbReference>
<dbReference type="Gene3D" id="2.60.40.10">
    <property type="entry name" value="Immunoglobulins"/>
    <property type="match status" value="4"/>
</dbReference>
<dbReference type="InterPro" id="IPR003961">
    <property type="entry name" value="FN3_dom"/>
</dbReference>
<dbReference type="InterPro" id="IPR036116">
    <property type="entry name" value="FN3_sf"/>
</dbReference>
<dbReference type="InterPro" id="IPR007110">
    <property type="entry name" value="Ig-like_dom"/>
</dbReference>
<dbReference type="InterPro" id="IPR036179">
    <property type="entry name" value="Ig-like_dom_sf"/>
</dbReference>
<dbReference type="InterPro" id="IPR013783">
    <property type="entry name" value="Ig-like_fold"/>
</dbReference>
<dbReference type="InterPro" id="IPR013098">
    <property type="entry name" value="Ig_I-set"/>
</dbReference>
<dbReference type="InterPro" id="IPR003599">
    <property type="entry name" value="Ig_sub"/>
</dbReference>
<dbReference type="InterPro" id="IPR003598">
    <property type="entry name" value="Ig_sub2"/>
</dbReference>
<dbReference type="InterPro" id="IPR050964">
    <property type="entry name" value="Striated_Muscle_Regulatory"/>
</dbReference>
<dbReference type="PANTHER" id="PTHR13817:SF49">
    <property type="entry name" value="MYOSIN-BINDING PROTEIN H"/>
    <property type="match status" value="1"/>
</dbReference>
<dbReference type="PANTHER" id="PTHR13817">
    <property type="entry name" value="TITIN"/>
    <property type="match status" value="1"/>
</dbReference>
<dbReference type="Pfam" id="PF00041">
    <property type="entry name" value="fn3"/>
    <property type="match status" value="2"/>
</dbReference>
<dbReference type="Pfam" id="PF07679">
    <property type="entry name" value="I-set"/>
    <property type="match status" value="2"/>
</dbReference>
<dbReference type="PRINTS" id="PR00014">
    <property type="entry name" value="FNTYPEIII"/>
</dbReference>
<dbReference type="SMART" id="SM00060">
    <property type="entry name" value="FN3"/>
    <property type="match status" value="2"/>
</dbReference>
<dbReference type="SMART" id="SM00409">
    <property type="entry name" value="IG"/>
    <property type="match status" value="2"/>
</dbReference>
<dbReference type="SMART" id="SM00408">
    <property type="entry name" value="IGc2"/>
    <property type="match status" value="2"/>
</dbReference>
<dbReference type="SUPFAM" id="SSF49265">
    <property type="entry name" value="Fibronectin type III"/>
    <property type="match status" value="1"/>
</dbReference>
<dbReference type="SUPFAM" id="SSF48726">
    <property type="entry name" value="Immunoglobulin"/>
    <property type="match status" value="2"/>
</dbReference>
<dbReference type="PROSITE" id="PS50853">
    <property type="entry name" value="FN3"/>
    <property type="match status" value="2"/>
</dbReference>
<dbReference type="PROSITE" id="PS50835">
    <property type="entry name" value="IG_LIKE"/>
    <property type="match status" value="2"/>
</dbReference>
<reference key="1">
    <citation type="journal article" date="1993" name="J. Biol. Chem.">
        <title>Molecular cloning of chicken myosin-binding protein (MyBP) H (86-kDa protein) reveals extensive homology with MyBP-C (C-protein) with conserved immunoglobulin C2 and fibronectin type III motifs.</title>
        <authorList>
            <person name="Vaughan K.T."/>
            <person name="Weber F.E."/>
            <person name="Einheber S."/>
            <person name="Fischman D.A."/>
        </authorList>
    </citation>
    <scope>NUCLEOTIDE SEQUENCE [MRNA]</scope>
    <scope>PROTEIN SEQUENCE OF 2-37</scope>
    <source>
        <tissue>Pectoralis muscle</tissue>
    </source>
</reference>
<gene>
    <name type="primary">MYBPH</name>
</gene>
<feature type="chain" id="PRO_0000072701" description="Myosin-binding protein H">
    <location>
        <begin position="1"/>
        <end position="537"/>
    </location>
</feature>
<feature type="domain" description="Fibronectin type-III 1" evidence="1">
    <location>
        <begin position="137"/>
        <end position="232"/>
    </location>
</feature>
<feature type="domain" description="Ig-like C2-type 1">
    <location>
        <begin position="236"/>
        <end position="324"/>
    </location>
</feature>
<feature type="domain" description="Fibronectin type-III 2" evidence="1">
    <location>
        <begin position="333"/>
        <end position="428"/>
    </location>
</feature>
<feature type="domain" description="Ig-like C2-type 2">
    <location>
        <begin position="444"/>
        <end position="528"/>
    </location>
</feature>
<feature type="region of interest" description="Disordered" evidence="2">
    <location>
        <begin position="1"/>
        <end position="138"/>
    </location>
</feature>
<feature type="compositionally biased region" description="Low complexity" evidence="2">
    <location>
        <begin position="1"/>
        <end position="25"/>
    </location>
</feature>
<feature type="compositionally biased region" description="Basic and acidic residues" evidence="2">
    <location>
        <begin position="26"/>
        <end position="69"/>
    </location>
</feature>
<feature type="compositionally biased region" description="Low complexity" evidence="2">
    <location>
        <begin position="87"/>
        <end position="104"/>
    </location>
</feature>
<feature type="compositionally biased region" description="Pro residues" evidence="2">
    <location>
        <begin position="112"/>
        <end position="124"/>
    </location>
</feature>
<feature type="sequence conflict" description="In Ref. 1; AA sequence." evidence="3" ref="1">
    <original>T</original>
    <variation>G</variation>
    <location>
        <position position="2"/>
    </location>
</feature>
<feature type="sequence conflict" description="In Ref. 1; AA sequence." evidence="3" ref="1">
    <original>A</original>
    <variation>P</variation>
    <location>
        <position position="9"/>
    </location>
</feature>
<feature type="sequence conflict" description="In Ref. 1; AA sequence." evidence="3" ref="1">
    <original>A</original>
    <variation>K</variation>
    <location>
        <position position="15"/>
    </location>
</feature>
<organism>
    <name type="scientific">Gallus gallus</name>
    <name type="common">Chicken</name>
    <dbReference type="NCBI Taxonomy" id="9031"/>
    <lineage>
        <taxon>Eukaryota</taxon>
        <taxon>Metazoa</taxon>
        <taxon>Chordata</taxon>
        <taxon>Craniata</taxon>
        <taxon>Vertebrata</taxon>
        <taxon>Euteleostomi</taxon>
        <taxon>Archelosauria</taxon>
        <taxon>Archosauria</taxon>
        <taxon>Dinosauria</taxon>
        <taxon>Saurischia</taxon>
        <taxon>Theropoda</taxon>
        <taxon>Coelurosauria</taxon>
        <taxon>Aves</taxon>
        <taxon>Neognathae</taxon>
        <taxon>Galloanserae</taxon>
        <taxon>Galliformes</taxon>
        <taxon>Phasianidae</taxon>
        <taxon>Phasianinae</taxon>
        <taxon>Gallus</taxon>
    </lineage>
</organism>
<proteinExistence type="evidence at protein level"/>